<sequence length="554" mass="61270">MAYYRTPHDVTALPAWQALKDHRQAMQDFSMREAFNADPQRFSQFTLSSCGLFLDYSKNLITSETRDLLVNLAKEVGLSDAIKSMITGELVNASEGRPALHTALRRPVGDKLSVNGVNVMPEVHKVLNQITELVGRIHDGLWRGYTEKPITDVVNIGIGGSFLGPELVSEALLSYAQKGVRCHYLANIDGSEFHELSAKIRAETTLFIVSSKSFNTLETLKNAQAARAWYLAQGGSEAELHRHFIAVSSNNAAAVAFGIREENIFPMWDWVGGRYSLWSAIGLPIALAIGMSNFKELLSGAYTMDQHFQSAPFEQNMPVLLALLGVWYGNFWGAQSHAILPYDHYLRNITKHLQQLDMESNGKSVRQDGTPVATDTGPVIWGGVGCNGQHAYHQLLHQGTQLIPADFIVPIVSFNPVADHHQWLYANCLSQSQALMLGKTRAEAESELREKGLSEAEIAKLAPHKVIPGNRPSNTLVVERISPRRLGALVALYEHKVFVQSVVWGINAFDQWGVELGKELGKGVYNRLVGSDETLADDASTQGLINYFRGRHRG</sequence>
<comment type="function">
    <text evidence="1">Catalyzes the reversible isomerization of glucose-6-phosphate to fructose-6-phosphate.</text>
</comment>
<comment type="catalytic activity">
    <reaction evidence="1">
        <text>alpha-D-glucose 6-phosphate = beta-D-fructose 6-phosphate</text>
        <dbReference type="Rhea" id="RHEA:11816"/>
        <dbReference type="ChEBI" id="CHEBI:57634"/>
        <dbReference type="ChEBI" id="CHEBI:58225"/>
        <dbReference type="EC" id="5.3.1.9"/>
    </reaction>
</comment>
<comment type="pathway">
    <text evidence="1">Carbohydrate biosynthesis; gluconeogenesis.</text>
</comment>
<comment type="pathway">
    <text evidence="1">Carbohydrate degradation; glycolysis; D-glyceraldehyde 3-phosphate and glycerone phosphate from D-glucose: step 2/4.</text>
</comment>
<comment type="subcellular location">
    <subcellularLocation>
        <location evidence="1">Cytoplasm</location>
    </subcellularLocation>
</comment>
<comment type="similarity">
    <text evidence="1">Belongs to the GPI family.</text>
</comment>
<protein>
    <recommendedName>
        <fullName evidence="1">Glucose-6-phosphate isomerase</fullName>
        <shortName evidence="1">GPI</shortName>
        <ecNumber evidence="1">5.3.1.9</ecNumber>
    </recommendedName>
    <alternativeName>
        <fullName evidence="1">Phosphoglucose isomerase</fullName>
        <shortName evidence="1">PGI</shortName>
    </alternativeName>
    <alternativeName>
        <fullName evidence="1">Phosphohexose isomerase</fullName>
        <shortName evidence="1">PHI</shortName>
    </alternativeName>
</protein>
<gene>
    <name evidence="1" type="primary">pgi</name>
    <name type="ordered locus">PFL_5280</name>
</gene>
<name>G6PI_PSEF5</name>
<keyword id="KW-0963">Cytoplasm</keyword>
<keyword id="KW-0312">Gluconeogenesis</keyword>
<keyword id="KW-0324">Glycolysis</keyword>
<keyword id="KW-0413">Isomerase</keyword>
<proteinExistence type="inferred from homology"/>
<dbReference type="EC" id="5.3.1.9" evidence="1"/>
<dbReference type="EMBL" id="CP000076">
    <property type="protein sequence ID" value="AAY94494.1"/>
    <property type="molecule type" value="Genomic_DNA"/>
</dbReference>
<dbReference type="RefSeq" id="WP_011063513.1">
    <property type="nucleotide sequence ID" value="NC_004129.6"/>
</dbReference>
<dbReference type="SMR" id="Q4K5Y1"/>
<dbReference type="STRING" id="220664.PFL_5280"/>
<dbReference type="GeneID" id="57478248"/>
<dbReference type="KEGG" id="pfl:PFL_5280"/>
<dbReference type="PATRIC" id="fig|220664.5.peg.5392"/>
<dbReference type="eggNOG" id="COG0166">
    <property type="taxonomic scope" value="Bacteria"/>
</dbReference>
<dbReference type="HOGENOM" id="CLU_017947_3_1_6"/>
<dbReference type="UniPathway" id="UPA00109">
    <property type="reaction ID" value="UER00181"/>
</dbReference>
<dbReference type="UniPathway" id="UPA00138"/>
<dbReference type="Proteomes" id="UP000008540">
    <property type="component" value="Chromosome"/>
</dbReference>
<dbReference type="GO" id="GO:0005829">
    <property type="term" value="C:cytosol"/>
    <property type="evidence" value="ECO:0007669"/>
    <property type="project" value="TreeGrafter"/>
</dbReference>
<dbReference type="GO" id="GO:0097367">
    <property type="term" value="F:carbohydrate derivative binding"/>
    <property type="evidence" value="ECO:0007669"/>
    <property type="project" value="InterPro"/>
</dbReference>
<dbReference type="GO" id="GO:0004347">
    <property type="term" value="F:glucose-6-phosphate isomerase activity"/>
    <property type="evidence" value="ECO:0007669"/>
    <property type="project" value="UniProtKB-UniRule"/>
</dbReference>
<dbReference type="GO" id="GO:0048029">
    <property type="term" value="F:monosaccharide binding"/>
    <property type="evidence" value="ECO:0007669"/>
    <property type="project" value="TreeGrafter"/>
</dbReference>
<dbReference type="GO" id="GO:0006094">
    <property type="term" value="P:gluconeogenesis"/>
    <property type="evidence" value="ECO:0007669"/>
    <property type="project" value="UniProtKB-UniRule"/>
</dbReference>
<dbReference type="GO" id="GO:0051156">
    <property type="term" value="P:glucose 6-phosphate metabolic process"/>
    <property type="evidence" value="ECO:0007669"/>
    <property type="project" value="TreeGrafter"/>
</dbReference>
<dbReference type="GO" id="GO:0006096">
    <property type="term" value="P:glycolytic process"/>
    <property type="evidence" value="ECO:0007669"/>
    <property type="project" value="UniProtKB-UniRule"/>
</dbReference>
<dbReference type="CDD" id="cd05015">
    <property type="entry name" value="SIS_PGI_1"/>
    <property type="match status" value="1"/>
</dbReference>
<dbReference type="CDD" id="cd05016">
    <property type="entry name" value="SIS_PGI_2"/>
    <property type="match status" value="1"/>
</dbReference>
<dbReference type="FunFam" id="3.40.50.10490:FF:000018">
    <property type="entry name" value="Glucose-6-phosphate isomerase"/>
    <property type="match status" value="1"/>
</dbReference>
<dbReference type="Gene3D" id="1.10.1390.10">
    <property type="match status" value="1"/>
</dbReference>
<dbReference type="Gene3D" id="3.40.50.10490">
    <property type="entry name" value="Glucose-6-phosphate isomerase like protein, domain 1"/>
    <property type="match status" value="2"/>
</dbReference>
<dbReference type="HAMAP" id="MF_00473">
    <property type="entry name" value="G6P_isomerase"/>
    <property type="match status" value="1"/>
</dbReference>
<dbReference type="InterPro" id="IPR001672">
    <property type="entry name" value="G6P_Isomerase"/>
</dbReference>
<dbReference type="InterPro" id="IPR023096">
    <property type="entry name" value="G6P_Isomerase_C"/>
</dbReference>
<dbReference type="InterPro" id="IPR018189">
    <property type="entry name" value="Phosphoglucose_isomerase_CS"/>
</dbReference>
<dbReference type="InterPro" id="IPR046348">
    <property type="entry name" value="SIS_dom_sf"/>
</dbReference>
<dbReference type="InterPro" id="IPR035476">
    <property type="entry name" value="SIS_PGI_1"/>
</dbReference>
<dbReference type="InterPro" id="IPR035482">
    <property type="entry name" value="SIS_PGI_2"/>
</dbReference>
<dbReference type="NCBIfam" id="NF001211">
    <property type="entry name" value="PRK00179.1"/>
    <property type="match status" value="1"/>
</dbReference>
<dbReference type="PANTHER" id="PTHR11469">
    <property type="entry name" value="GLUCOSE-6-PHOSPHATE ISOMERASE"/>
    <property type="match status" value="1"/>
</dbReference>
<dbReference type="PANTHER" id="PTHR11469:SF1">
    <property type="entry name" value="GLUCOSE-6-PHOSPHATE ISOMERASE"/>
    <property type="match status" value="1"/>
</dbReference>
<dbReference type="Pfam" id="PF00342">
    <property type="entry name" value="PGI"/>
    <property type="match status" value="1"/>
</dbReference>
<dbReference type="PRINTS" id="PR00662">
    <property type="entry name" value="G6PISOMERASE"/>
</dbReference>
<dbReference type="SUPFAM" id="SSF53697">
    <property type="entry name" value="SIS domain"/>
    <property type="match status" value="1"/>
</dbReference>
<dbReference type="PROSITE" id="PS00765">
    <property type="entry name" value="P_GLUCOSE_ISOMERASE_1"/>
    <property type="match status" value="1"/>
</dbReference>
<dbReference type="PROSITE" id="PS00174">
    <property type="entry name" value="P_GLUCOSE_ISOMERASE_2"/>
    <property type="match status" value="1"/>
</dbReference>
<dbReference type="PROSITE" id="PS51463">
    <property type="entry name" value="P_GLUCOSE_ISOMERASE_3"/>
    <property type="match status" value="1"/>
</dbReference>
<organism>
    <name type="scientific">Pseudomonas fluorescens (strain ATCC BAA-477 / NRRL B-23932 / Pf-5)</name>
    <dbReference type="NCBI Taxonomy" id="220664"/>
    <lineage>
        <taxon>Bacteria</taxon>
        <taxon>Pseudomonadati</taxon>
        <taxon>Pseudomonadota</taxon>
        <taxon>Gammaproteobacteria</taxon>
        <taxon>Pseudomonadales</taxon>
        <taxon>Pseudomonadaceae</taxon>
        <taxon>Pseudomonas</taxon>
    </lineage>
</organism>
<feature type="chain" id="PRO_0000180710" description="Glucose-6-phosphate isomerase">
    <location>
        <begin position="1"/>
        <end position="554"/>
    </location>
</feature>
<feature type="active site" description="Proton donor" evidence="1">
    <location>
        <position position="359"/>
    </location>
</feature>
<feature type="active site" evidence="1">
    <location>
        <position position="390"/>
    </location>
</feature>
<feature type="active site" evidence="1">
    <location>
        <position position="518"/>
    </location>
</feature>
<accession>Q4K5Y1</accession>
<reference key="1">
    <citation type="journal article" date="2005" name="Nat. Biotechnol.">
        <title>Complete genome sequence of the plant commensal Pseudomonas fluorescens Pf-5.</title>
        <authorList>
            <person name="Paulsen I.T."/>
            <person name="Press C.M."/>
            <person name="Ravel J."/>
            <person name="Kobayashi D.Y."/>
            <person name="Myers G.S.A."/>
            <person name="Mavrodi D.V."/>
            <person name="DeBoy R.T."/>
            <person name="Seshadri R."/>
            <person name="Ren Q."/>
            <person name="Madupu R."/>
            <person name="Dodson R.J."/>
            <person name="Durkin A.S."/>
            <person name="Brinkac L.M."/>
            <person name="Daugherty S.C."/>
            <person name="Sullivan S.A."/>
            <person name="Rosovitz M.J."/>
            <person name="Gwinn M.L."/>
            <person name="Zhou L."/>
            <person name="Schneider D.J."/>
            <person name="Cartinhour S.W."/>
            <person name="Nelson W.C."/>
            <person name="Weidman J."/>
            <person name="Watkins K."/>
            <person name="Tran K."/>
            <person name="Khouri H."/>
            <person name="Pierson E.A."/>
            <person name="Pierson L.S. III"/>
            <person name="Thomashow L.S."/>
            <person name="Loper J.E."/>
        </authorList>
    </citation>
    <scope>NUCLEOTIDE SEQUENCE [LARGE SCALE GENOMIC DNA]</scope>
    <source>
        <strain>ATCC BAA-477 / NRRL B-23932 / Pf-5</strain>
    </source>
</reference>
<evidence type="ECO:0000255" key="1">
    <source>
        <dbReference type="HAMAP-Rule" id="MF_00473"/>
    </source>
</evidence>